<sequence length="361" mass="40234">MHISTIKTAGSSGMSHMNEAYSSTTATEMVARGAGSEIIHTEIDSNGSKELAPNGAQSRVQKPSEDAVRAPYDYIRTLPSKRIRETFIDALDSWLAVPAGSSTSIKSIIGMLHQSSLMLDDIEDDSTLRRGKPTAHTLFGTAQTINSANWVFVCAFEELRQLRGVDAATVFVEELKNLHCGQALDLHWKHHTYIPSVDEYLNMVDHKTGGLFRLCVRLMQGESSTSCHHIDAERFITLLGRYFQIRDDYQNLVSDEYTNQKGFCEDLDEGKISLPLIYCLAGSDPTQIMIKGILQHKRTGEMPLSMKKLILEKMRSGGALNATISLLKDLQDDILEELKSLELAFGSGNPMLELVLRRLWI</sequence>
<feature type="chain" id="PRO_0000451068" description="Geranylgeranyl pyrophosphate synthase 3">
    <location>
        <begin position="1"/>
        <end position="361"/>
    </location>
</feature>
<feature type="region of interest" description="Disordered" evidence="2">
    <location>
        <begin position="44"/>
        <end position="63"/>
    </location>
</feature>
<feature type="binding site" evidence="1">
    <location>
        <position position="81"/>
    </location>
    <ligand>
        <name>isopentenyl diphosphate</name>
        <dbReference type="ChEBI" id="CHEBI:128769"/>
    </ligand>
</feature>
<feature type="binding site" evidence="1">
    <location>
        <position position="84"/>
    </location>
    <ligand>
        <name>isopentenyl diphosphate</name>
        <dbReference type="ChEBI" id="CHEBI:128769"/>
    </ligand>
</feature>
<feature type="binding site" evidence="1">
    <location>
        <position position="113"/>
    </location>
    <ligand>
        <name>isopentenyl diphosphate</name>
        <dbReference type="ChEBI" id="CHEBI:128769"/>
    </ligand>
</feature>
<feature type="binding site" evidence="1">
    <location>
        <position position="120"/>
    </location>
    <ligand>
        <name>Mg(2+)</name>
        <dbReference type="ChEBI" id="CHEBI:18420"/>
        <label>1</label>
    </ligand>
</feature>
<feature type="binding site" evidence="1">
    <location>
        <position position="120"/>
    </location>
    <ligand>
        <name>Mg(2+)</name>
        <dbReference type="ChEBI" id="CHEBI:18420"/>
        <label>2</label>
    </ligand>
</feature>
<feature type="binding site" evidence="1">
    <location>
        <position position="124"/>
    </location>
    <ligand>
        <name>Mg(2+)</name>
        <dbReference type="ChEBI" id="CHEBI:18420"/>
        <label>1</label>
    </ligand>
</feature>
<feature type="binding site" evidence="1">
    <location>
        <position position="124"/>
    </location>
    <ligand>
        <name>Mg(2+)</name>
        <dbReference type="ChEBI" id="CHEBI:18420"/>
        <label>2</label>
    </ligand>
</feature>
<feature type="binding site" evidence="1">
    <location>
        <position position="129"/>
    </location>
    <ligand>
        <name>dimethylallyl diphosphate</name>
        <dbReference type="ChEBI" id="CHEBI:57623"/>
    </ligand>
</feature>
<feature type="binding site" evidence="1">
    <location>
        <position position="130"/>
    </location>
    <ligand>
        <name>isopentenyl diphosphate</name>
        <dbReference type="ChEBI" id="CHEBI:128769"/>
    </ligand>
</feature>
<feature type="binding site" evidence="1">
    <location>
        <position position="207"/>
    </location>
    <ligand>
        <name>dimethylallyl diphosphate</name>
        <dbReference type="ChEBI" id="CHEBI:57623"/>
    </ligand>
</feature>
<feature type="binding site" evidence="1">
    <location>
        <position position="208"/>
    </location>
    <ligand>
        <name>dimethylallyl diphosphate</name>
        <dbReference type="ChEBI" id="CHEBI:57623"/>
    </ligand>
</feature>
<feature type="binding site" evidence="1">
    <location>
        <position position="244"/>
    </location>
    <ligand>
        <name>dimethylallyl diphosphate</name>
        <dbReference type="ChEBI" id="CHEBI:57623"/>
    </ligand>
</feature>
<feature type="binding site" evidence="1">
    <location>
        <position position="247"/>
    </location>
    <ligand>
        <name>Mg(2+)</name>
        <dbReference type="ChEBI" id="CHEBI:18420"/>
        <label>3</label>
    </ligand>
</feature>
<feature type="binding site" evidence="1">
    <location>
        <position position="251"/>
    </location>
    <ligand>
        <name>dimethylallyl diphosphate</name>
        <dbReference type="ChEBI" id="CHEBI:57623"/>
    </ligand>
</feature>
<feature type="binding site" evidence="1">
    <location>
        <position position="261"/>
    </location>
    <ligand>
        <name>dimethylallyl diphosphate</name>
        <dbReference type="ChEBI" id="CHEBI:57623"/>
    </ligand>
</feature>
<feature type="binding site" evidence="1">
    <location>
        <position position="271"/>
    </location>
    <ligand>
        <name>dimethylallyl diphosphate</name>
        <dbReference type="ChEBI" id="CHEBI:57623"/>
    </ligand>
</feature>
<organism>
    <name type="scientific">Zymoseptoria tritici (strain CBS 115943 / IPO323)</name>
    <name type="common">Speckled leaf blotch fungus</name>
    <name type="synonym">Septoria tritici</name>
    <dbReference type="NCBI Taxonomy" id="336722"/>
    <lineage>
        <taxon>Eukaryota</taxon>
        <taxon>Fungi</taxon>
        <taxon>Dikarya</taxon>
        <taxon>Ascomycota</taxon>
        <taxon>Pezizomycotina</taxon>
        <taxon>Dothideomycetes</taxon>
        <taxon>Dothideomycetidae</taxon>
        <taxon>Mycosphaerellales</taxon>
        <taxon>Mycosphaerellaceae</taxon>
        <taxon>Zymoseptoria</taxon>
    </lineage>
</organism>
<comment type="function">
    <text evidence="3">Geranylgeranyl pyrophosphate synthase; part of the gene cluster 25 that mediates the biosynthesis of an isoprenoid secondary metabolite.</text>
</comment>
<comment type="catalytic activity">
    <reaction evidence="1">
        <text>isopentenyl diphosphate + dimethylallyl diphosphate = (2E)-geranyl diphosphate + diphosphate</text>
        <dbReference type="Rhea" id="RHEA:22408"/>
        <dbReference type="ChEBI" id="CHEBI:33019"/>
        <dbReference type="ChEBI" id="CHEBI:57623"/>
        <dbReference type="ChEBI" id="CHEBI:58057"/>
        <dbReference type="ChEBI" id="CHEBI:128769"/>
        <dbReference type="EC" id="2.5.1.1"/>
    </reaction>
</comment>
<comment type="catalytic activity">
    <reaction evidence="1">
        <text>isopentenyl diphosphate + (2E)-geranyl diphosphate = (2E,6E)-farnesyl diphosphate + diphosphate</text>
        <dbReference type="Rhea" id="RHEA:19361"/>
        <dbReference type="ChEBI" id="CHEBI:33019"/>
        <dbReference type="ChEBI" id="CHEBI:58057"/>
        <dbReference type="ChEBI" id="CHEBI:128769"/>
        <dbReference type="ChEBI" id="CHEBI:175763"/>
        <dbReference type="EC" id="2.5.1.10"/>
    </reaction>
</comment>
<comment type="catalytic activity">
    <reaction evidence="1">
        <text>isopentenyl diphosphate + (2E,6E)-farnesyl diphosphate = (2E,6E,10E)-geranylgeranyl diphosphate + diphosphate</text>
        <dbReference type="Rhea" id="RHEA:17653"/>
        <dbReference type="ChEBI" id="CHEBI:33019"/>
        <dbReference type="ChEBI" id="CHEBI:58756"/>
        <dbReference type="ChEBI" id="CHEBI:128769"/>
        <dbReference type="ChEBI" id="CHEBI:175763"/>
        <dbReference type="EC" id="2.5.1.29"/>
    </reaction>
</comment>
<comment type="cofactor">
    <cofactor evidence="1">
        <name>Mg(2+)</name>
        <dbReference type="ChEBI" id="CHEBI:18420"/>
    </cofactor>
    <text evidence="1">Binds 3 Mg(2+) ions per subunit.</text>
</comment>
<comment type="similarity">
    <text evidence="5">Belongs to the FPP/GGPP synthase family.</text>
</comment>
<evidence type="ECO:0000250" key="1">
    <source>
        <dbReference type="UniProtKB" id="Q12051"/>
    </source>
</evidence>
<evidence type="ECO:0000256" key="2">
    <source>
        <dbReference type="SAM" id="MobiDB-lite"/>
    </source>
</evidence>
<evidence type="ECO:0000269" key="3">
    <source>
    </source>
</evidence>
<evidence type="ECO:0000303" key="4">
    <source>
    </source>
</evidence>
<evidence type="ECO:0000305" key="5"/>
<evidence type="ECO:0000305" key="6">
    <source>
    </source>
</evidence>
<accession>F9XLC1</accession>
<keyword id="KW-0460">Magnesium</keyword>
<keyword id="KW-0479">Metal-binding</keyword>
<keyword id="KW-1185">Reference proteome</keyword>
<keyword id="KW-0808">Transferase</keyword>
<reference key="1">
    <citation type="journal article" date="2011" name="PLoS Genet.">
        <title>Finished genome of the fungal wheat pathogen Mycosphaerella graminicola reveals dispensome structure, chromosome plasticity, and stealth pathogenesis.</title>
        <authorList>
            <person name="Goodwin S.B."/>
            <person name="Ben M'barek S."/>
            <person name="Dhillon B."/>
            <person name="Wittenberg A.H.J."/>
            <person name="Crane C.F."/>
            <person name="Hane J.K."/>
            <person name="Foster A.J."/>
            <person name="Van der Lee T.A.J."/>
            <person name="Grimwood J."/>
            <person name="Aerts A."/>
            <person name="Antoniw J."/>
            <person name="Bailey A."/>
            <person name="Bluhm B."/>
            <person name="Bowler J."/>
            <person name="Bristow J."/>
            <person name="van der Burgt A."/>
            <person name="Canto-Canche B."/>
            <person name="Churchill A.C.L."/>
            <person name="Conde-Ferraez L."/>
            <person name="Cools H.J."/>
            <person name="Coutinho P.M."/>
            <person name="Csukai M."/>
            <person name="Dehal P."/>
            <person name="De Wit P."/>
            <person name="Donzelli B."/>
            <person name="van de Geest H.C."/>
            <person name="van Ham R.C.H.J."/>
            <person name="Hammond-Kosack K.E."/>
            <person name="Henrissat B."/>
            <person name="Kilian A."/>
            <person name="Kobayashi A.K."/>
            <person name="Koopmann E."/>
            <person name="Kourmpetis Y."/>
            <person name="Kuzniar A."/>
            <person name="Lindquist E."/>
            <person name="Lombard V."/>
            <person name="Maliepaard C."/>
            <person name="Martins N."/>
            <person name="Mehrabi R."/>
            <person name="Nap J.P.H."/>
            <person name="Ponomarenko A."/>
            <person name="Rudd J.J."/>
            <person name="Salamov A."/>
            <person name="Schmutz J."/>
            <person name="Schouten H.J."/>
            <person name="Shapiro H."/>
            <person name="Stergiopoulos I."/>
            <person name="Torriani S.F.F."/>
            <person name="Tu H."/>
            <person name="de Vries R.P."/>
            <person name="Waalwijk C."/>
            <person name="Ware S.B."/>
            <person name="Wiebenga A."/>
            <person name="Zwiers L.-H."/>
            <person name="Oliver R.P."/>
            <person name="Grigoriev I.V."/>
            <person name="Kema G.H.J."/>
        </authorList>
    </citation>
    <scope>NUCLEOTIDE SEQUENCE [LARGE SCALE GENOMIC DNA]</scope>
    <source>
        <strain>CBS 115943 / IPO323</strain>
    </source>
</reference>
<reference key="2">
    <citation type="journal article" date="2017" name="BMC Genomics">
        <title>In silico prediction and characterization of secondary metabolite biosynthetic gene clusters in the wheat pathogen Zymoseptoria tritici.</title>
        <authorList>
            <person name="Cairns T."/>
            <person name="Meyer V."/>
        </authorList>
    </citation>
    <scope>IDENTIFICATION</scope>
    <scope>FUNCTION</scope>
</reference>
<proteinExistence type="inferred from homology"/>
<protein>
    <recommendedName>
        <fullName evidence="4">Geranylgeranyl pyrophosphate synthase 3</fullName>
        <shortName evidence="4">GGPP synthase 3</shortName>
        <shortName evidence="4">GGPPSase 3</shortName>
        <ecNumber evidence="6">2.5.1.-</ecNumber>
    </recommendedName>
    <alternativeName>
        <fullName evidence="1">(2E,6E)-farnesyl diphosphate synthase</fullName>
    </alternativeName>
    <alternativeName>
        <fullName evidence="1">Dimethylallyltranstransferase</fullName>
        <ecNumber evidence="1">2.5.1.1</ecNumber>
    </alternativeName>
    <alternativeName>
        <fullName evidence="1">Farnesyl diphosphate synthase</fullName>
    </alternativeName>
    <alternativeName>
        <fullName evidence="1">Farnesyltranstransferase</fullName>
        <ecNumber evidence="1">2.5.1.29</ecNumber>
    </alternativeName>
    <alternativeName>
        <fullName evidence="1">Geranylgeranyl diphosphate synthase</fullName>
    </alternativeName>
    <alternativeName>
        <fullName evidence="1">Geranyltranstransferase</fullName>
        <ecNumber evidence="1">2.5.1.10</ecNumber>
    </alternativeName>
</protein>
<name>GGS3_ZYMTI</name>
<gene>
    <name type="primary">GGS3</name>
    <name type="ORF">MYCGRDRAFT_76129</name>
</gene>
<dbReference type="EC" id="2.5.1.-" evidence="6"/>
<dbReference type="EC" id="2.5.1.1" evidence="1"/>
<dbReference type="EC" id="2.5.1.29" evidence="1"/>
<dbReference type="EC" id="2.5.1.10" evidence="1"/>
<dbReference type="EMBL" id="CM001205">
    <property type="protein sequence ID" value="EGP84165.1"/>
    <property type="molecule type" value="Genomic_DNA"/>
</dbReference>
<dbReference type="RefSeq" id="XP_003849189.1">
    <property type="nucleotide sequence ID" value="XM_003849141.1"/>
</dbReference>
<dbReference type="SMR" id="F9XLC1"/>
<dbReference type="STRING" id="336722.F9XLC1"/>
<dbReference type="EnsemblFungi" id="Mycgr3T76129">
    <property type="protein sequence ID" value="Mycgr3P76129"/>
    <property type="gene ID" value="Mycgr3G76129"/>
</dbReference>
<dbReference type="GeneID" id="13398736"/>
<dbReference type="KEGG" id="ztr:MYCGRDRAFT_76129"/>
<dbReference type="eggNOG" id="KOG0777">
    <property type="taxonomic scope" value="Eukaryota"/>
</dbReference>
<dbReference type="HOGENOM" id="CLU_014015_6_0_1"/>
<dbReference type="InParanoid" id="F9XLC1"/>
<dbReference type="OMA" id="CAGERHK"/>
<dbReference type="OrthoDB" id="6921389at2759"/>
<dbReference type="Proteomes" id="UP000008062">
    <property type="component" value="Chromosome 10"/>
</dbReference>
<dbReference type="GO" id="GO:0004337">
    <property type="term" value="F:(2E,6E)-farnesyl diphosphate synthase activity"/>
    <property type="evidence" value="ECO:0007669"/>
    <property type="project" value="UniProtKB-EC"/>
</dbReference>
<dbReference type="GO" id="GO:0004161">
    <property type="term" value="F:dimethylallyltranstransferase activity"/>
    <property type="evidence" value="ECO:0007669"/>
    <property type="project" value="UniProtKB-EC"/>
</dbReference>
<dbReference type="GO" id="GO:0004311">
    <property type="term" value="F:geranylgeranyl diphosphate synthase activity"/>
    <property type="evidence" value="ECO:0007669"/>
    <property type="project" value="UniProtKB-EC"/>
</dbReference>
<dbReference type="GO" id="GO:0046872">
    <property type="term" value="F:metal ion binding"/>
    <property type="evidence" value="ECO:0007669"/>
    <property type="project" value="UniProtKB-KW"/>
</dbReference>
<dbReference type="GO" id="GO:0046165">
    <property type="term" value="P:alcohol biosynthetic process"/>
    <property type="evidence" value="ECO:0007669"/>
    <property type="project" value="UniProtKB-ARBA"/>
</dbReference>
<dbReference type="GO" id="GO:0008299">
    <property type="term" value="P:isoprenoid biosynthetic process"/>
    <property type="evidence" value="ECO:0007669"/>
    <property type="project" value="InterPro"/>
</dbReference>
<dbReference type="GO" id="GO:0043386">
    <property type="term" value="P:mycotoxin biosynthetic process"/>
    <property type="evidence" value="ECO:0007669"/>
    <property type="project" value="UniProtKB-ARBA"/>
</dbReference>
<dbReference type="CDD" id="cd00685">
    <property type="entry name" value="Trans_IPPS_HT"/>
    <property type="match status" value="1"/>
</dbReference>
<dbReference type="Gene3D" id="1.10.600.10">
    <property type="entry name" value="Farnesyl Diphosphate Synthase"/>
    <property type="match status" value="1"/>
</dbReference>
<dbReference type="InterPro" id="IPR008949">
    <property type="entry name" value="Isoprenoid_synthase_dom_sf"/>
</dbReference>
<dbReference type="InterPro" id="IPR000092">
    <property type="entry name" value="Polyprenyl_synt"/>
</dbReference>
<dbReference type="InterPro" id="IPR033749">
    <property type="entry name" value="Polyprenyl_synt_CS"/>
</dbReference>
<dbReference type="PANTHER" id="PTHR12001">
    <property type="entry name" value="GERANYLGERANYL PYROPHOSPHATE SYNTHASE"/>
    <property type="match status" value="1"/>
</dbReference>
<dbReference type="PANTHER" id="PTHR12001:SF72">
    <property type="entry name" value="THIJ_PFPI FAMILY PROTEIN (AFU_ORTHOLOGUE AFUA_3G01210)-RELATED"/>
    <property type="match status" value="1"/>
</dbReference>
<dbReference type="Pfam" id="PF00348">
    <property type="entry name" value="polyprenyl_synt"/>
    <property type="match status" value="1"/>
</dbReference>
<dbReference type="SFLD" id="SFLDS00005">
    <property type="entry name" value="Isoprenoid_Synthase_Type_I"/>
    <property type="match status" value="1"/>
</dbReference>
<dbReference type="SUPFAM" id="SSF48576">
    <property type="entry name" value="Terpenoid synthases"/>
    <property type="match status" value="1"/>
</dbReference>
<dbReference type="PROSITE" id="PS00723">
    <property type="entry name" value="POLYPRENYL_SYNTHASE_1"/>
    <property type="match status" value="1"/>
</dbReference>
<dbReference type="PROSITE" id="PS00444">
    <property type="entry name" value="POLYPRENYL_SYNTHASE_2"/>
    <property type="match status" value="1"/>
</dbReference>